<reference key="1">
    <citation type="journal article" date="2004" name="Proc. Natl. Acad. Sci. U.S.A.">
        <title>Genome sequence of the deep-sea gamma-proteobacterium Idiomarina loihiensis reveals amino acid fermentation as a source of carbon and energy.</title>
        <authorList>
            <person name="Hou S."/>
            <person name="Saw J.H."/>
            <person name="Lee K.S."/>
            <person name="Freitas T.A."/>
            <person name="Belisle C."/>
            <person name="Kawarabayasi Y."/>
            <person name="Donachie S.P."/>
            <person name="Pikina A."/>
            <person name="Galperin M.Y."/>
            <person name="Koonin E.V."/>
            <person name="Makarova K.S."/>
            <person name="Omelchenko M.V."/>
            <person name="Sorokin A."/>
            <person name="Wolf Y.I."/>
            <person name="Li Q.X."/>
            <person name="Keum Y.S."/>
            <person name="Campbell S."/>
            <person name="Denery J."/>
            <person name="Aizawa S."/>
            <person name="Shibata S."/>
            <person name="Malahoff A."/>
            <person name="Alam M."/>
        </authorList>
    </citation>
    <scope>NUCLEOTIDE SEQUENCE [LARGE SCALE GENOMIC DNA]</scope>
    <source>
        <strain>ATCC BAA-735 / DSM 15497 / L2-TR</strain>
    </source>
</reference>
<name>NRDR_IDILO</name>
<gene>
    <name evidence="1" type="primary">nrdR</name>
    <name type="ordered locus">IL1871</name>
</gene>
<protein>
    <recommendedName>
        <fullName evidence="1">Transcriptional repressor NrdR</fullName>
    </recommendedName>
</protein>
<organism>
    <name type="scientific">Idiomarina loihiensis (strain ATCC BAA-735 / DSM 15497 / L2-TR)</name>
    <dbReference type="NCBI Taxonomy" id="283942"/>
    <lineage>
        <taxon>Bacteria</taxon>
        <taxon>Pseudomonadati</taxon>
        <taxon>Pseudomonadota</taxon>
        <taxon>Gammaproteobacteria</taxon>
        <taxon>Alteromonadales</taxon>
        <taxon>Idiomarinaceae</taxon>
        <taxon>Idiomarina</taxon>
    </lineage>
</organism>
<proteinExistence type="inferred from homology"/>
<accession>Q5QXT5</accession>
<keyword id="KW-0067">ATP-binding</keyword>
<keyword id="KW-0238">DNA-binding</keyword>
<keyword id="KW-0479">Metal-binding</keyword>
<keyword id="KW-0547">Nucleotide-binding</keyword>
<keyword id="KW-1185">Reference proteome</keyword>
<keyword id="KW-0678">Repressor</keyword>
<keyword id="KW-0804">Transcription</keyword>
<keyword id="KW-0805">Transcription regulation</keyword>
<keyword id="KW-0862">Zinc</keyword>
<keyword id="KW-0863">Zinc-finger</keyword>
<dbReference type="EMBL" id="AE017340">
    <property type="protein sequence ID" value="AAV82703.1"/>
    <property type="molecule type" value="Genomic_DNA"/>
</dbReference>
<dbReference type="RefSeq" id="WP_011235103.1">
    <property type="nucleotide sequence ID" value="NC_006512.1"/>
</dbReference>
<dbReference type="SMR" id="Q5QXT5"/>
<dbReference type="STRING" id="283942.IL1871"/>
<dbReference type="GeneID" id="41337055"/>
<dbReference type="KEGG" id="ilo:IL1871"/>
<dbReference type="eggNOG" id="COG1327">
    <property type="taxonomic scope" value="Bacteria"/>
</dbReference>
<dbReference type="HOGENOM" id="CLU_108412_0_0_6"/>
<dbReference type="OrthoDB" id="9807461at2"/>
<dbReference type="Proteomes" id="UP000001171">
    <property type="component" value="Chromosome"/>
</dbReference>
<dbReference type="GO" id="GO:0005524">
    <property type="term" value="F:ATP binding"/>
    <property type="evidence" value="ECO:0007669"/>
    <property type="project" value="UniProtKB-KW"/>
</dbReference>
<dbReference type="GO" id="GO:0003677">
    <property type="term" value="F:DNA binding"/>
    <property type="evidence" value="ECO:0007669"/>
    <property type="project" value="UniProtKB-KW"/>
</dbReference>
<dbReference type="GO" id="GO:0008270">
    <property type="term" value="F:zinc ion binding"/>
    <property type="evidence" value="ECO:0007669"/>
    <property type="project" value="UniProtKB-UniRule"/>
</dbReference>
<dbReference type="GO" id="GO:0045892">
    <property type="term" value="P:negative regulation of DNA-templated transcription"/>
    <property type="evidence" value="ECO:0007669"/>
    <property type="project" value="UniProtKB-UniRule"/>
</dbReference>
<dbReference type="HAMAP" id="MF_00440">
    <property type="entry name" value="NrdR"/>
    <property type="match status" value="1"/>
</dbReference>
<dbReference type="InterPro" id="IPR005144">
    <property type="entry name" value="ATP-cone_dom"/>
</dbReference>
<dbReference type="InterPro" id="IPR055173">
    <property type="entry name" value="NrdR-like_N"/>
</dbReference>
<dbReference type="InterPro" id="IPR003796">
    <property type="entry name" value="RNR_NrdR-like"/>
</dbReference>
<dbReference type="NCBIfam" id="TIGR00244">
    <property type="entry name" value="transcriptional regulator NrdR"/>
    <property type="match status" value="1"/>
</dbReference>
<dbReference type="PANTHER" id="PTHR30455">
    <property type="entry name" value="TRANSCRIPTIONAL REPRESSOR NRDR"/>
    <property type="match status" value="1"/>
</dbReference>
<dbReference type="PANTHER" id="PTHR30455:SF2">
    <property type="entry name" value="TRANSCRIPTIONAL REPRESSOR NRDR"/>
    <property type="match status" value="1"/>
</dbReference>
<dbReference type="Pfam" id="PF03477">
    <property type="entry name" value="ATP-cone"/>
    <property type="match status" value="1"/>
</dbReference>
<dbReference type="Pfam" id="PF22811">
    <property type="entry name" value="Zn_ribbon_NrdR"/>
    <property type="match status" value="1"/>
</dbReference>
<dbReference type="PROSITE" id="PS51161">
    <property type="entry name" value="ATP_CONE"/>
    <property type="match status" value="1"/>
</dbReference>
<feature type="chain" id="PRO_0000182305" description="Transcriptional repressor NrdR">
    <location>
        <begin position="1"/>
        <end position="149"/>
    </location>
</feature>
<feature type="domain" description="ATP-cone" evidence="1">
    <location>
        <begin position="49"/>
        <end position="139"/>
    </location>
</feature>
<feature type="zinc finger region" evidence="1">
    <location>
        <begin position="3"/>
        <end position="34"/>
    </location>
</feature>
<comment type="function">
    <text evidence="1">Negatively regulates transcription of bacterial ribonucleotide reductase nrd genes and operons by binding to NrdR-boxes.</text>
</comment>
<comment type="cofactor">
    <cofactor evidence="1">
        <name>Zn(2+)</name>
        <dbReference type="ChEBI" id="CHEBI:29105"/>
    </cofactor>
    <text evidence="1">Binds 1 zinc ion.</text>
</comment>
<comment type="similarity">
    <text evidence="1">Belongs to the NrdR family.</text>
</comment>
<sequence length="149" mass="17159">MHCPFCGTQDTKVIDSRLVADGASVRRRRECNHCKERFTTFETAELVMPRVIKTDGSREPFNEDKLRNGLLRALEKRPVSLELMEQAINKIKSSIRATGEREISSNFVGSLVMENLKQIDKVAYVRFASVYRSFEDIREFGEEIARLND</sequence>
<evidence type="ECO:0000255" key="1">
    <source>
        <dbReference type="HAMAP-Rule" id="MF_00440"/>
    </source>
</evidence>